<reference key="1">
    <citation type="journal article" date="2002" name="Nature">
        <title>The genome sequence of Schizosaccharomyces pombe.</title>
        <authorList>
            <person name="Wood V."/>
            <person name="Gwilliam R."/>
            <person name="Rajandream M.A."/>
            <person name="Lyne M.H."/>
            <person name="Lyne R."/>
            <person name="Stewart A."/>
            <person name="Sgouros J.G."/>
            <person name="Peat N."/>
            <person name="Hayles J."/>
            <person name="Baker S.G."/>
            <person name="Basham D."/>
            <person name="Bowman S."/>
            <person name="Brooks K."/>
            <person name="Brown D."/>
            <person name="Brown S."/>
            <person name="Chillingworth T."/>
            <person name="Churcher C.M."/>
            <person name="Collins M."/>
            <person name="Connor R."/>
            <person name="Cronin A."/>
            <person name="Davis P."/>
            <person name="Feltwell T."/>
            <person name="Fraser A."/>
            <person name="Gentles S."/>
            <person name="Goble A."/>
            <person name="Hamlin N."/>
            <person name="Harris D.E."/>
            <person name="Hidalgo J."/>
            <person name="Hodgson G."/>
            <person name="Holroyd S."/>
            <person name="Hornsby T."/>
            <person name="Howarth S."/>
            <person name="Huckle E.J."/>
            <person name="Hunt S."/>
            <person name="Jagels K."/>
            <person name="James K.D."/>
            <person name="Jones L."/>
            <person name="Jones M."/>
            <person name="Leather S."/>
            <person name="McDonald S."/>
            <person name="McLean J."/>
            <person name="Mooney P."/>
            <person name="Moule S."/>
            <person name="Mungall K.L."/>
            <person name="Murphy L.D."/>
            <person name="Niblett D."/>
            <person name="Odell C."/>
            <person name="Oliver K."/>
            <person name="O'Neil S."/>
            <person name="Pearson D."/>
            <person name="Quail M.A."/>
            <person name="Rabbinowitsch E."/>
            <person name="Rutherford K.M."/>
            <person name="Rutter S."/>
            <person name="Saunders D."/>
            <person name="Seeger K."/>
            <person name="Sharp S."/>
            <person name="Skelton J."/>
            <person name="Simmonds M.N."/>
            <person name="Squares R."/>
            <person name="Squares S."/>
            <person name="Stevens K."/>
            <person name="Taylor K."/>
            <person name="Taylor R.G."/>
            <person name="Tivey A."/>
            <person name="Walsh S.V."/>
            <person name="Warren T."/>
            <person name="Whitehead S."/>
            <person name="Woodward J.R."/>
            <person name="Volckaert G."/>
            <person name="Aert R."/>
            <person name="Robben J."/>
            <person name="Grymonprez B."/>
            <person name="Weltjens I."/>
            <person name="Vanstreels E."/>
            <person name="Rieger M."/>
            <person name="Schaefer M."/>
            <person name="Mueller-Auer S."/>
            <person name="Gabel C."/>
            <person name="Fuchs M."/>
            <person name="Duesterhoeft A."/>
            <person name="Fritzc C."/>
            <person name="Holzer E."/>
            <person name="Moestl D."/>
            <person name="Hilbert H."/>
            <person name="Borzym K."/>
            <person name="Langer I."/>
            <person name="Beck A."/>
            <person name="Lehrach H."/>
            <person name="Reinhardt R."/>
            <person name="Pohl T.M."/>
            <person name="Eger P."/>
            <person name="Zimmermann W."/>
            <person name="Wedler H."/>
            <person name="Wambutt R."/>
            <person name="Purnelle B."/>
            <person name="Goffeau A."/>
            <person name="Cadieu E."/>
            <person name="Dreano S."/>
            <person name="Gloux S."/>
            <person name="Lelaure V."/>
            <person name="Mottier S."/>
            <person name="Galibert F."/>
            <person name="Aves S.J."/>
            <person name="Xiang Z."/>
            <person name="Hunt C."/>
            <person name="Moore K."/>
            <person name="Hurst S.M."/>
            <person name="Lucas M."/>
            <person name="Rochet M."/>
            <person name="Gaillardin C."/>
            <person name="Tallada V.A."/>
            <person name="Garzon A."/>
            <person name="Thode G."/>
            <person name="Daga R.R."/>
            <person name="Cruzado L."/>
            <person name="Jimenez J."/>
            <person name="Sanchez M."/>
            <person name="del Rey F."/>
            <person name="Benito J."/>
            <person name="Dominguez A."/>
            <person name="Revuelta J.L."/>
            <person name="Moreno S."/>
            <person name="Armstrong J."/>
            <person name="Forsburg S.L."/>
            <person name="Cerutti L."/>
            <person name="Lowe T."/>
            <person name="McCombie W.R."/>
            <person name="Paulsen I."/>
            <person name="Potashkin J."/>
            <person name="Shpakovski G.V."/>
            <person name="Ussery D."/>
            <person name="Barrell B.G."/>
            <person name="Nurse P."/>
        </authorList>
    </citation>
    <scope>NUCLEOTIDE SEQUENCE [LARGE SCALE GENOMIC DNA]</scope>
    <source>
        <strain>972 / ATCC 24843</strain>
    </source>
</reference>
<reference key="2">
    <citation type="journal article" date="2005" name="Eukaryot. Cell">
        <title>Systematic deletion analysis of fission yeast protein kinases.</title>
        <authorList>
            <person name="Bimbo A."/>
            <person name="Jia Y."/>
            <person name="Poh S.L."/>
            <person name="Karuturi R.K.M."/>
            <person name="den Elzen N."/>
            <person name="Peng X."/>
            <person name="Zheng L."/>
            <person name="O'Connell M."/>
            <person name="Liu E.T."/>
            <person name="Balasubramanian M.K."/>
            <person name="Liu J."/>
        </authorList>
    </citation>
    <scope>IDENTIFICATION</scope>
</reference>
<reference key="3">
    <citation type="journal article" date="2006" name="Nat. Biotechnol.">
        <title>ORFeome cloning and global analysis of protein localization in the fission yeast Schizosaccharomyces pombe.</title>
        <authorList>
            <person name="Matsuyama A."/>
            <person name="Arai R."/>
            <person name="Yashiroda Y."/>
            <person name="Shirai A."/>
            <person name="Kamata A."/>
            <person name="Sekido S."/>
            <person name="Kobayashi Y."/>
            <person name="Hashimoto A."/>
            <person name="Hamamoto M."/>
            <person name="Hiraoka Y."/>
            <person name="Horinouchi S."/>
            <person name="Yoshida M."/>
        </authorList>
    </citation>
    <scope>SUBCELLULAR LOCATION [LARGE SCALE ANALYSIS]</scope>
</reference>
<name>PPK23_SCHPO</name>
<evidence type="ECO:0000255" key="1">
    <source>
        <dbReference type="PROSITE-ProRule" id="PRU00159"/>
    </source>
</evidence>
<evidence type="ECO:0000255" key="2">
    <source>
        <dbReference type="PROSITE-ProRule" id="PRU10027"/>
    </source>
</evidence>
<evidence type="ECO:0000256" key="3">
    <source>
        <dbReference type="SAM" id="MobiDB-lite"/>
    </source>
</evidence>
<evidence type="ECO:0000269" key="4">
    <source>
    </source>
</evidence>
<feature type="chain" id="PRO_0000256822" description="Serine/threonine-protein kinase ppk23">
    <location>
        <begin position="1"/>
        <end position="398"/>
    </location>
</feature>
<feature type="domain" description="Protein kinase" evidence="1">
    <location>
        <begin position="74"/>
        <end position="359"/>
    </location>
</feature>
<feature type="region of interest" description="Disordered" evidence="3">
    <location>
        <begin position="359"/>
        <end position="398"/>
    </location>
</feature>
<feature type="compositionally biased region" description="Polar residues" evidence="3">
    <location>
        <begin position="387"/>
        <end position="398"/>
    </location>
</feature>
<feature type="active site" description="Proton acceptor" evidence="1 2">
    <location>
        <position position="198"/>
    </location>
</feature>
<feature type="binding site" evidence="1">
    <location>
        <begin position="80"/>
        <end position="88"/>
    </location>
    <ligand>
        <name>ATP</name>
        <dbReference type="ChEBI" id="CHEBI:30616"/>
    </ligand>
</feature>
<feature type="binding site" evidence="1">
    <location>
        <position position="103"/>
    </location>
    <ligand>
        <name>ATP</name>
        <dbReference type="ChEBI" id="CHEBI:30616"/>
    </ligand>
</feature>
<organism>
    <name type="scientific">Schizosaccharomyces pombe (strain 972 / ATCC 24843)</name>
    <name type="common">Fission yeast</name>
    <dbReference type="NCBI Taxonomy" id="284812"/>
    <lineage>
        <taxon>Eukaryota</taxon>
        <taxon>Fungi</taxon>
        <taxon>Dikarya</taxon>
        <taxon>Ascomycota</taxon>
        <taxon>Taphrinomycotina</taxon>
        <taxon>Schizosaccharomycetes</taxon>
        <taxon>Schizosaccharomycetales</taxon>
        <taxon>Schizosaccharomycetaceae</taxon>
        <taxon>Schizosaccharomyces</taxon>
    </lineage>
</organism>
<proteinExistence type="inferred from homology"/>
<dbReference type="EC" id="2.7.11.1"/>
<dbReference type="EMBL" id="CU329671">
    <property type="protein sequence ID" value="CAA18412.1"/>
    <property type="molecule type" value="Genomic_DNA"/>
</dbReference>
<dbReference type="PIR" id="T39779">
    <property type="entry name" value="T39779"/>
</dbReference>
<dbReference type="RefSeq" id="NP_595739.1">
    <property type="nucleotide sequence ID" value="NM_001021637.2"/>
</dbReference>
<dbReference type="SMR" id="O60145"/>
<dbReference type="BioGRID" id="277318">
    <property type="interactions" value="52"/>
</dbReference>
<dbReference type="FunCoup" id="O60145">
    <property type="interactions" value="406"/>
</dbReference>
<dbReference type="STRING" id="284812.O60145"/>
<dbReference type="iPTMnet" id="O60145"/>
<dbReference type="PaxDb" id="4896-SPBC18H10.15.1"/>
<dbReference type="EnsemblFungi" id="SPBC18H10.15.1">
    <property type="protein sequence ID" value="SPBC18H10.15.1:pep"/>
    <property type="gene ID" value="SPBC18H10.15"/>
</dbReference>
<dbReference type="GeneID" id="2540799"/>
<dbReference type="KEGG" id="spo:2540799"/>
<dbReference type="PomBase" id="SPBC18H10.15"/>
<dbReference type="VEuPathDB" id="FungiDB:SPBC18H10.15"/>
<dbReference type="eggNOG" id="KOG0663">
    <property type="taxonomic scope" value="Eukaryota"/>
</dbReference>
<dbReference type="HOGENOM" id="CLU_000288_181_1_1"/>
<dbReference type="InParanoid" id="O60145"/>
<dbReference type="OMA" id="WVARATN"/>
<dbReference type="PhylomeDB" id="O60145"/>
<dbReference type="PRO" id="PR:O60145"/>
<dbReference type="Proteomes" id="UP000002485">
    <property type="component" value="Chromosome II"/>
</dbReference>
<dbReference type="GO" id="GO:0000785">
    <property type="term" value="C:chromatin"/>
    <property type="evidence" value="ECO:0000314"/>
    <property type="project" value="PomBase"/>
</dbReference>
<dbReference type="GO" id="GO:0000307">
    <property type="term" value="C:cyclin-dependent protein kinase holoenzyme complex"/>
    <property type="evidence" value="ECO:0000314"/>
    <property type="project" value="PomBase"/>
</dbReference>
<dbReference type="GO" id="GO:0005634">
    <property type="term" value="C:nucleus"/>
    <property type="evidence" value="ECO:0000314"/>
    <property type="project" value="PomBase"/>
</dbReference>
<dbReference type="GO" id="GO:0005524">
    <property type="term" value="F:ATP binding"/>
    <property type="evidence" value="ECO:0007669"/>
    <property type="project" value="UniProtKB-KW"/>
</dbReference>
<dbReference type="GO" id="GO:0004693">
    <property type="term" value="F:cyclin-dependent protein serine/threonine kinase activity"/>
    <property type="evidence" value="ECO:0000315"/>
    <property type="project" value="PomBase"/>
</dbReference>
<dbReference type="GO" id="GO:0106310">
    <property type="term" value="F:protein serine kinase activity"/>
    <property type="evidence" value="ECO:0007669"/>
    <property type="project" value="RHEA"/>
</dbReference>
<dbReference type="GO" id="GO:0004674">
    <property type="term" value="F:protein serine/threonine kinase activity"/>
    <property type="evidence" value="ECO:0000318"/>
    <property type="project" value="GO_Central"/>
</dbReference>
<dbReference type="GO" id="GO:2001178">
    <property type="term" value="P:positive regulation of mediator complex assembly"/>
    <property type="evidence" value="ECO:0000314"/>
    <property type="project" value="PomBase"/>
</dbReference>
<dbReference type="GO" id="GO:0060261">
    <property type="term" value="P:positive regulation of transcription initiation by RNA polymerase II"/>
    <property type="evidence" value="ECO:0000269"/>
    <property type="project" value="PomBase"/>
</dbReference>
<dbReference type="GO" id="GO:0051726">
    <property type="term" value="P:regulation of cell cycle"/>
    <property type="evidence" value="ECO:0000318"/>
    <property type="project" value="GO_Central"/>
</dbReference>
<dbReference type="GO" id="GO:0023052">
    <property type="term" value="P:signaling"/>
    <property type="evidence" value="ECO:0000303"/>
    <property type="project" value="PomBase"/>
</dbReference>
<dbReference type="CDD" id="cd07843">
    <property type="entry name" value="STKc_CDC2L1"/>
    <property type="match status" value="1"/>
</dbReference>
<dbReference type="FunFam" id="1.10.510.10:FF:000738">
    <property type="entry name" value="Cdc2-related protein kinase 1"/>
    <property type="match status" value="1"/>
</dbReference>
<dbReference type="FunFam" id="3.30.200.20:FF:000172">
    <property type="entry name" value="cyclin-dependent kinase G-2 isoform X1"/>
    <property type="match status" value="1"/>
</dbReference>
<dbReference type="Gene3D" id="3.30.200.20">
    <property type="entry name" value="Phosphorylase Kinase, domain 1"/>
    <property type="match status" value="1"/>
</dbReference>
<dbReference type="Gene3D" id="1.10.510.10">
    <property type="entry name" value="Transferase(Phosphotransferase) domain 1"/>
    <property type="match status" value="1"/>
</dbReference>
<dbReference type="InterPro" id="IPR050108">
    <property type="entry name" value="CDK"/>
</dbReference>
<dbReference type="InterPro" id="IPR045267">
    <property type="entry name" value="CDK11/PITSLRE_STKc"/>
</dbReference>
<dbReference type="InterPro" id="IPR011009">
    <property type="entry name" value="Kinase-like_dom_sf"/>
</dbReference>
<dbReference type="InterPro" id="IPR000719">
    <property type="entry name" value="Prot_kinase_dom"/>
</dbReference>
<dbReference type="InterPro" id="IPR008271">
    <property type="entry name" value="Ser/Thr_kinase_AS"/>
</dbReference>
<dbReference type="PANTHER" id="PTHR24056">
    <property type="entry name" value="CELL DIVISION PROTEIN KINASE"/>
    <property type="match status" value="1"/>
</dbReference>
<dbReference type="PANTHER" id="PTHR24056:SF107">
    <property type="entry name" value="CYCLIN-DEPENDENT KINASE 11A-RELATED"/>
    <property type="match status" value="1"/>
</dbReference>
<dbReference type="Pfam" id="PF00069">
    <property type="entry name" value="Pkinase"/>
    <property type="match status" value="1"/>
</dbReference>
<dbReference type="SMART" id="SM00220">
    <property type="entry name" value="S_TKc"/>
    <property type="match status" value="1"/>
</dbReference>
<dbReference type="SUPFAM" id="SSF56112">
    <property type="entry name" value="Protein kinase-like (PK-like)"/>
    <property type="match status" value="1"/>
</dbReference>
<dbReference type="PROSITE" id="PS50011">
    <property type="entry name" value="PROTEIN_KINASE_DOM"/>
    <property type="match status" value="1"/>
</dbReference>
<dbReference type="PROSITE" id="PS00108">
    <property type="entry name" value="PROTEIN_KINASE_ST"/>
    <property type="match status" value="1"/>
</dbReference>
<keyword id="KW-0067">ATP-binding</keyword>
<keyword id="KW-0418">Kinase</keyword>
<keyword id="KW-0547">Nucleotide-binding</keyword>
<keyword id="KW-0539">Nucleus</keyword>
<keyword id="KW-1185">Reference proteome</keyword>
<keyword id="KW-0723">Serine/threonine-protein kinase</keyword>
<keyword id="KW-0808">Transferase</keyword>
<gene>
    <name type="primary">ppk23</name>
    <name type="ORF">SPBC18H10.15</name>
</gene>
<protein>
    <recommendedName>
        <fullName>Serine/threonine-protein kinase ppk23</fullName>
        <ecNumber>2.7.11.1</ecNumber>
    </recommendedName>
</protein>
<comment type="catalytic activity">
    <reaction>
        <text>L-seryl-[protein] + ATP = O-phospho-L-seryl-[protein] + ADP + H(+)</text>
        <dbReference type="Rhea" id="RHEA:17989"/>
        <dbReference type="Rhea" id="RHEA-COMP:9863"/>
        <dbReference type="Rhea" id="RHEA-COMP:11604"/>
        <dbReference type="ChEBI" id="CHEBI:15378"/>
        <dbReference type="ChEBI" id="CHEBI:29999"/>
        <dbReference type="ChEBI" id="CHEBI:30616"/>
        <dbReference type="ChEBI" id="CHEBI:83421"/>
        <dbReference type="ChEBI" id="CHEBI:456216"/>
        <dbReference type="EC" id="2.7.11.1"/>
    </reaction>
</comment>
<comment type="catalytic activity">
    <reaction>
        <text>L-threonyl-[protein] + ATP = O-phospho-L-threonyl-[protein] + ADP + H(+)</text>
        <dbReference type="Rhea" id="RHEA:46608"/>
        <dbReference type="Rhea" id="RHEA-COMP:11060"/>
        <dbReference type="Rhea" id="RHEA-COMP:11605"/>
        <dbReference type="ChEBI" id="CHEBI:15378"/>
        <dbReference type="ChEBI" id="CHEBI:30013"/>
        <dbReference type="ChEBI" id="CHEBI:30616"/>
        <dbReference type="ChEBI" id="CHEBI:61977"/>
        <dbReference type="ChEBI" id="CHEBI:456216"/>
        <dbReference type="EC" id="2.7.11.1"/>
    </reaction>
</comment>
<comment type="subcellular location">
    <subcellularLocation>
        <location evidence="4">Nucleus</location>
    </subcellularLocation>
</comment>
<comment type="similarity">
    <text evidence="1">Belongs to the protein kinase superfamily. Ser/Thr protein kinase family.</text>
</comment>
<sequence length="398" mass="46123">MAGSKWETEETNQFAIENQKLEEEWRKKRRLEKKRKRKILEEEEKAEERNIDACRLYLMGNTPELKSCNSIDDYEILEKIEEGSYGIVYRGLDKSTNTLVALKKIKFDPNGIGFPITSLREIESLSSIRHDNIVELEKVVVGKDLKDVYLVMEFMEHDLKTLLDNMPEDFLQSEVKTLMLQLLAATAFMHHHWYLHRDLKPSNLLMNNTGEIKLADFGLARPVSEPKSSLTRLVVTLWYRAPELLLGAPSYGKEIDMWSIGCIFAEMITRTPLFSGKSELDQLYKIFNLLGYPTREEWPQYFLLPYANKIKHPTVPTHSKIRTSIPNLTGNAYDLLNRLLSLNPAKRISAKEALEHPYFYESPRPKDPKFFPTFPSKAKGESKEKNVFQSFRSASPKK</sequence>
<accession>O60145</accession>